<organism>
    <name type="scientific">Homo sapiens</name>
    <name type="common">Human</name>
    <dbReference type="NCBI Taxonomy" id="9606"/>
    <lineage>
        <taxon>Eukaryota</taxon>
        <taxon>Metazoa</taxon>
        <taxon>Chordata</taxon>
        <taxon>Craniata</taxon>
        <taxon>Vertebrata</taxon>
        <taxon>Euteleostomi</taxon>
        <taxon>Mammalia</taxon>
        <taxon>Eutheria</taxon>
        <taxon>Euarchontoglires</taxon>
        <taxon>Primates</taxon>
        <taxon>Haplorrhini</taxon>
        <taxon>Catarrhini</taxon>
        <taxon>Hominidae</taxon>
        <taxon>Homo</taxon>
    </lineage>
</organism>
<reference key="1">
    <citation type="journal article" date="2006" name="Nature">
        <title>DNA sequence and analysis of human chromosome 8.</title>
        <authorList>
            <person name="Nusbaum C."/>
            <person name="Mikkelsen T.S."/>
            <person name="Zody M.C."/>
            <person name="Asakawa S."/>
            <person name="Taudien S."/>
            <person name="Garber M."/>
            <person name="Kodira C.D."/>
            <person name="Schueler M.G."/>
            <person name="Shimizu A."/>
            <person name="Whittaker C.A."/>
            <person name="Chang J.L."/>
            <person name="Cuomo C.A."/>
            <person name="Dewar K."/>
            <person name="FitzGerald M.G."/>
            <person name="Yang X."/>
            <person name="Allen N.R."/>
            <person name="Anderson S."/>
            <person name="Asakawa T."/>
            <person name="Blechschmidt K."/>
            <person name="Bloom T."/>
            <person name="Borowsky M.L."/>
            <person name="Butler J."/>
            <person name="Cook A."/>
            <person name="Corum B."/>
            <person name="DeArellano K."/>
            <person name="DeCaprio D."/>
            <person name="Dooley K.T."/>
            <person name="Dorris L. III"/>
            <person name="Engels R."/>
            <person name="Gloeckner G."/>
            <person name="Hafez N."/>
            <person name="Hagopian D.S."/>
            <person name="Hall J.L."/>
            <person name="Ishikawa S.K."/>
            <person name="Jaffe D.B."/>
            <person name="Kamat A."/>
            <person name="Kudoh J."/>
            <person name="Lehmann R."/>
            <person name="Lokitsang T."/>
            <person name="Macdonald P."/>
            <person name="Major J.E."/>
            <person name="Matthews C.D."/>
            <person name="Mauceli E."/>
            <person name="Menzel U."/>
            <person name="Mihalev A.H."/>
            <person name="Minoshima S."/>
            <person name="Murayama Y."/>
            <person name="Naylor J.W."/>
            <person name="Nicol R."/>
            <person name="Nguyen C."/>
            <person name="O'Leary S.B."/>
            <person name="O'Neill K."/>
            <person name="Parker S.C.J."/>
            <person name="Polley A."/>
            <person name="Raymond C.K."/>
            <person name="Reichwald K."/>
            <person name="Rodriguez J."/>
            <person name="Sasaki T."/>
            <person name="Schilhabel M."/>
            <person name="Siddiqui R."/>
            <person name="Smith C.L."/>
            <person name="Sneddon T.P."/>
            <person name="Talamas J.A."/>
            <person name="Tenzin P."/>
            <person name="Topham K."/>
            <person name="Venkataraman V."/>
            <person name="Wen G."/>
            <person name="Yamazaki S."/>
            <person name="Young S.K."/>
            <person name="Zeng Q."/>
            <person name="Zimmer A.R."/>
            <person name="Rosenthal A."/>
            <person name="Birren B.W."/>
            <person name="Platzer M."/>
            <person name="Shimizu N."/>
            <person name="Lander E.S."/>
        </authorList>
    </citation>
    <scope>NUCLEOTIDE SEQUENCE [LARGE SCALE GENOMIC DNA]</scope>
</reference>
<reference key="2">
    <citation type="journal article" date="2004" name="Genome Res.">
        <title>The status, quality, and expansion of the NIH full-length cDNA project: the Mammalian Gene Collection (MGC).</title>
        <authorList>
            <consortium name="The MGC Project Team"/>
        </authorList>
    </citation>
    <scope>NUCLEOTIDE SEQUENCE [LARGE SCALE MRNA]</scope>
    <source>
        <tissue>Skin</tissue>
    </source>
</reference>
<feature type="chain" id="PRO_0000332236" description="Zinc finger protein 705D">
    <location>
        <begin position="1"/>
        <end position="300"/>
    </location>
</feature>
<feature type="domain" description="KRAB" evidence="3">
    <location>
        <begin position="7"/>
        <end position="78"/>
    </location>
</feature>
<feature type="zinc finger region" description="C2H2-type 1" evidence="2">
    <location>
        <begin position="172"/>
        <end position="194"/>
    </location>
</feature>
<feature type="zinc finger region" description="C2H2-type 2" evidence="2">
    <location>
        <begin position="200"/>
        <end position="222"/>
    </location>
</feature>
<feature type="zinc finger region" description="C2H2-type 3" evidence="2">
    <location>
        <begin position="228"/>
        <end position="250"/>
    </location>
</feature>
<feature type="zinc finger region" description="C2H2-type 4; degenerate" evidence="2">
    <location>
        <begin position="256"/>
        <end position="278"/>
    </location>
</feature>
<feature type="sequence conflict" description="In Ref. 2; AAI10824." evidence="4" ref="2">
    <original>C</original>
    <variation>Y</variation>
    <location>
        <position position="144"/>
    </location>
</feature>
<name>Z705D_HUMAN</name>
<sequence>MHSLEKVTFEDVAIDFTQEEWDMMDTSKRKLYRDVMLENISHLVSLGYQISKSYIILQLEQGKELWREGRVFLQDQNPDRESALKKKHMISMHPIIRKDASTSMTMENSLILEDPFEYNDSGEDCTHSSTITQCLLTHSGKKPCVSKQCGKSLRNLLSPKPRKQIHTKGKSYQCNLCEKAYTNCFYLRRHKMTHTGERPYACHLCGKAFTQCSHLRRHEKTHTGERPYKCHQCGKAFIQSFNLRRHERTHLGQKCYECDKSGKAFSQSSGFRGNKIIHIGEKPHACLLCGKAFSLSSDLR</sequence>
<accession>P0CH99</accession>
<accession>A8K971</accession>
<accession>A8MY01</accession>
<accession>Q2TAN0</accession>
<comment type="function">
    <text evidence="1">May be involved in transcriptional regulation.</text>
</comment>
<comment type="interaction">
    <interactant intactId="EBI-12957159">
        <id>P0CH99</id>
    </interactant>
    <interactant intactId="EBI-11978177">
        <id>Q96NT3-2</id>
        <label>GUCD1</label>
    </interactant>
    <organismsDiffer>false</organismsDiffer>
    <experiments>3</experiments>
</comment>
<comment type="subcellular location">
    <subcellularLocation>
        <location evidence="1">Nucleus</location>
    </subcellularLocation>
</comment>
<comment type="similarity">
    <text evidence="4">Belongs to the krueppel C2H2-type zinc-finger protein family.</text>
</comment>
<proteinExistence type="evidence at protein level"/>
<protein>
    <recommendedName>
        <fullName>Zinc finger protein 705D</fullName>
    </recommendedName>
</protein>
<dbReference type="EMBL" id="AC130366">
    <property type="status" value="NOT_ANNOTATED_CDS"/>
    <property type="molecule type" value="Genomic_DNA"/>
</dbReference>
<dbReference type="EMBL" id="BC110823">
    <property type="protein sequence ID" value="AAI10824.1"/>
    <property type="molecule type" value="mRNA"/>
</dbReference>
<dbReference type="CCDS" id="CCDS43712.1"/>
<dbReference type="RefSeq" id="NP_001034704.2">
    <property type="nucleotide sequence ID" value="NM_001039615.3"/>
</dbReference>
<dbReference type="RefSeq" id="XP_011542134.1">
    <property type="nucleotide sequence ID" value="XM_011543832.2"/>
</dbReference>
<dbReference type="RefSeq" id="XP_054217150.1">
    <property type="nucleotide sequence ID" value="XM_054361175.1"/>
</dbReference>
<dbReference type="SMR" id="P0CH99"/>
<dbReference type="BioGRID" id="609366">
    <property type="interactions" value="1"/>
</dbReference>
<dbReference type="IntAct" id="P0CH99">
    <property type="interactions" value="1"/>
</dbReference>
<dbReference type="STRING" id="9606.ENSP00000382957"/>
<dbReference type="BioMuta" id="ZNF705D"/>
<dbReference type="DMDM" id="308191622"/>
<dbReference type="MassIVE" id="P0CH99"/>
<dbReference type="PaxDb" id="9606-ENSP00000382957"/>
<dbReference type="PeptideAtlas" id="P0CH99"/>
<dbReference type="Antibodypedia" id="58562">
    <property type="antibodies" value="19 antibodies from 6 providers"/>
</dbReference>
<dbReference type="DNASU" id="728957"/>
<dbReference type="Ensembl" id="ENST00000400085.8">
    <property type="protein sequence ID" value="ENSP00000382957.3"/>
    <property type="gene ID" value="ENSG00000215343.8"/>
</dbReference>
<dbReference type="GeneID" id="728957"/>
<dbReference type="KEGG" id="hsa:728957"/>
<dbReference type="MANE-Select" id="ENST00000400085.8">
    <property type="protein sequence ID" value="ENSP00000382957.3"/>
    <property type="RefSeq nucleotide sequence ID" value="NM_001039615.3"/>
    <property type="RefSeq protein sequence ID" value="NP_001034704.2"/>
</dbReference>
<dbReference type="UCSC" id="uc064kiq.1">
    <property type="organism name" value="human"/>
</dbReference>
<dbReference type="AGR" id="HGNC:33202"/>
<dbReference type="CTD" id="728957"/>
<dbReference type="GeneCards" id="ZNF705D"/>
<dbReference type="HGNC" id="HGNC:33202">
    <property type="gene designation" value="ZNF705D"/>
</dbReference>
<dbReference type="HPA" id="ENSG00000215343">
    <property type="expression patterns" value="Tissue enriched (epididymis)"/>
</dbReference>
<dbReference type="neXtProt" id="NX_P0CH99"/>
<dbReference type="OpenTargets" id="ENSG00000215343"/>
<dbReference type="VEuPathDB" id="HostDB:ENSG00000215343"/>
<dbReference type="eggNOG" id="KOG1721">
    <property type="taxonomic scope" value="Eukaryota"/>
</dbReference>
<dbReference type="GeneTree" id="ENSGT00940000163626"/>
<dbReference type="HOGENOM" id="CLU_002678_0_7_1"/>
<dbReference type="InParanoid" id="P0CH99"/>
<dbReference type="OMA" id="HERTHMK"/>
<dbReference type="OrthoDB" id="9520929at2759"/>
<dbReference type="PAN-GO" id="P0CH99">
    <property type="GO annotations" value="3 GO annotations based on evolutionary models"/>
</dbReference>
<dbReference type="PhylomeDB" id="P0CH99"/>
<dbReference type="TreeFam" id="TF338497"/>
<dbReference type="PathwayCommons" id="P0CH99"/>
<dbReference type="Reactome" id="R-HSA-212436">
    <property type="pathway name" value="Generic Transcription Pathway"/>
</dbReference>
<dbReference type="SignaLink" id="P0CH99"/>
<dbReference type="BioGRID-ORCS" id="728957">
    <property type="hits" value="159 hits in 1024 CRISPR screens"/>
</dbReference>
<dbReference type="ChiTaRS" id="ZNF705D">
    <property type="organism name" value="human"/>
</dbReference>
<dbReference type="GenomeRNAi" id="728957"/>
<dbReference type="Pharos" id="P0CH99">
    <property type="development level" value="Tdark"/>
</dbReference>
<dbReference type="PRO" id="PR:P0CH99"/>
<dbReference type="Proteomes" id="UP000005640">
    <property type="component" value="Chromosome 8"/>
</dbReference>
<dbReference type="RNAct" id="P0CH99">
    <property type="molecule type" value="protein"/>
</dbReference>
<dbReference type="Bgee" id="ENSG00000215343">
    <property type="expression patterns" value="Expressed in male germ line stem cell (sensu Vertebrata) in testis and 8 other cell types or tissues"/>
</dbReference>
<dbReference type="GO" id="GO:0005634">
    <property type="term" value="C:nucleus"/>
    <property type="evidence" value="ECO:0000318"/>
    <property type="project" value="GO_Central"/>
</dbReference>
<dbReference type="GO" id="GO:0000981">
    <property type="term" value="F:DNA-binding transcription factor activity, RNA polymerase II-specific"/>
    <property type="evidence" value="ECO:0000318"/>
    <property type="project" value="GO_Central"/>
</dbReference>
<dbReference type="GO" id="GO:0000977">
    <property type="term" value="F:RNA polymerase II transcription regulatory region sequence-specific DNA binding"/>
    <property type="evidence" value="ECO:0000318"/>
    <property type="project" value="GO_Central"/>
</dbReference>
<dbReference type="GO" id="GO:0008270">
    <property type="term" value="F:zinc ion binding"/>
    <property type="evidence" value="ECO:0007669"/>
    <property type="project" value="UniProtKB-KW"/>
</dbReference>
<dbReference type="GO" id="GO:0006357">
    <property type="term" value="P:regulation of transcription by RNA polymerase II"/>
    <property type="evidence" value="ECO:0000318"/>
    <property type="project" value="GO_Central"/>
</dbReference>
<dbReference type="CDD" id="cd07765">
    <property type="entry name" value="KRAB_A-box"/>
    <property type="match status" value="1"/>
</dbReference>
<dbReference type="FunFam" id="3.30.160.60:FF:000446">
    <property type="entry name" value="Zinc finger protein"/>
    <property type="match status" value="1"/>
</dbReference>
<dbReference type="FunFam" id="3.30.160.60:FF:002754">
    <property type="entry name" value="Zinc finger protein 705A"/>
    <property type="match status" value="1"/>
</dbReference>
<dbReference type="FunFam" id="3.30.160.60:FF:002524">
    <property type="entry name" value="Zinc finger protein 705F"/>
    <property type="match status" value="2"/>
</dbReference>
<dbReference type="FunFam" id="3.30.160.60:FF:000787">
    <property type="entry name" value="Zinc finger protein 784"/>
    <property type="match status" value="1"/>
</dbReference>
<dbReference type="Gene3D" id="6.10.140.140">
    <property type="match status" value="1"/>
</dbReference>
<dbReference type="Gene3D" id="3.30.160.60">
    <property type="entry name" value="Classic Zinc Finger"/>
    <property type="match status" value="5"/>
</dbReference>
<dbReference type="InterPro" id="IPR050752">
    <property type="entry name" value="C2H2-ZF_domain"/>
</dbReference>
<dbReference type="InterPro" id="IPR001909">
    <property type="entry name" value="KRAB"/>
</dbReference>
<dbReference type="InterPro" id="IPR036051">
    <property type="entry name" value="KRAB_dom_sf"/>
</dbReference>
<dbReference type="InterPro" id="IPR036236">
    <property type="entry name" value="Znf_C2H2_sf"/>
</dbReference>
<dbReference type="InterPro" id="IPR013087">
    <property type="entry name" value="Znf_C2H2_type"/>
</dbReference>
<dbReference type="PANTHER" id="PTHR24384">
    <property type="entry name" value="FINGER PUTATIVE TRANSCRIPTION FACTOR FAMILY-RELATED"/>
    <property type="match status" value="1"/>
</dbReference>
<dbReference type="PANTHER" id="PTHR24384:SF247">
    <property type="entry name" value="ZINC FINGER PROTEIN 977"/>
    <property type="match status" value="1"/>
</dbReference>
<dbReference type="Pfam" id="PF01352">
    <property type="entry name" value="KRAB"/>
    <property type="match status" value="1"/>
</dbReference>
<dbReference type="Pfam" id="PF00096">
    <property type="entry name" value="zf-C2H2"/>
    <property type="match status" value="3"/>
</dbReference>
<dbReference type="SMART" id="SM00349">
    <property type="entry name" value="KRAB"/>
    <property type="match status" value="1"/>
</dbReference>
<dbReference type="SMART" id="SM00355">
    <property type="entry name" value="ZnF_C2H2"/>
    <property type="match status" value="3"/>
</dbReference>
<dbReference type="SUPFAM" id="SSF57667">
    <property type="entry name" value="beta-beta-alpha zinc fingers"/>
    <property type="match status" value="4"/>
</dbReference>
<dbReference type="SUPFAM" id="SSF109640">
    <property type="entry name" value="KRAB domain (Kruppel-associated box)"/>
    <property type="match status" value="1"/>
</dbReference>
<dbReference type="PROSITE" id="PS50805">
    <property type="entry name" value="KRAB"/>
    <property type="match status" value="1"/>
</dbReference>
<dbReference type="PROSITE" id="PS00028">
    <property type="entry name" value="ZINC_FINGER_C2H2_1"/>
    <property type="match status" value="3"/>
</dbReference>
<dbReference type="PROSITE" id="PS50157">
    <property type="entry name" value="ZINC_FINGER_C2H2_2"/>
    <property type="match status" value="4"/>
</dbReference>
<gene>
    <name type="primary">ZNF705D</name>
</gene>
<keyword id="KW-0238">DNA-binding</keyword>
<keyword id="KW-0479">Metal-binding</keyword>
<keyword id="KW-0539">Nucleus</keyword>
<keyword id="KW-1185">Reference proteome</keyword>
<keyword id="KW-0677">Repeat</keyword>
<keyword id="KW-0804">Transcription</keyword>
<keyword id="KW-0805">Transcription regulation</keyword>
<keyword id="KW-0862">Zinc</keyword>
<keyword id="KW-0863">Zinc-finger</keyword>
<evidence type="ECO:0000250" key="1"/>
<evidence type="ECO:0000255" key="2">
    <source>
        <dbReference type="PROSITE-ProRule" id="PRU00042"/>
    </source>
</evidence>
<evidence type="ECO:0000255" key="3">
    <source>
        <dbReference type="PROSITE-ProRule" id="PRU00119"/>
    </source>
</evidence>
<evidence type="ECO:0000305" key="4"/>